<name>SIAT2_XENTR</name>
<proteinExistence type="evidence at transcript level"/>
<accession>Q701R1</accession>
<reference key="1">
    <citation type="journal article" date="2005" name="Glycobiology">
        <title>The animal sialyltransferases and sialyltransferase-related genes: a phylogenetic approach.</title>
        <authorList>
            <person name="Harduin-Lepers A."/>
            <person name="Mollicone R."/>
            <person name="Delannoy P."/>
            <person name="Oriol R."/>
        </authorList>
    </citation>
    <scope>NUCLEOTIDE SEQUENCE [MRNA]</scope>
</reference>
<evidence type="ECO:0000250" key="1"/>
<evidence type="ECO:0000250" key="2">
    <source>
        <dbReference type="UniProtKB" id="Q96JF0"/>
    </source>
</evidence>
<evidence type="ECO:0000255" key="3"/>
<evidence type="ECO:0000305" key="4"/>
<dbReference type="EC" id="2.4.3.1" evidence="2"/>
<dbReference type="EMBL" id="AJ627628">
    <property type="protein sequence ID" value="CAF29496.1"/>
    <property type="molecule type" value="mRNA"/>
</dbReference>
<dbReference type="SMR" id="Q701R1"/>
<dbReference type="FunCoup" id="Q701R1">
    <property type="interactions" value="594"/>
</dbReference>
<dbReference type="STRING" id="8364.ENSXETP00000001964"/>
<dbReference type="CAZy" id="GT29">
    <property type="family name" value="Glycosyltransferase Family 29"/>
</dbReference>
<dbReference type="GlyCosmos" id="Q701R1">
    <property type="glycosylation" value="3 sites, No reported glycans"/>
</dbReference>
<dbReference type="PaxDb" id="8364-ENSXETP00000022803"/>
<dbReference type="eggNOG" id="KOG2692">
    <property type="taxonomic scope" value="Eukaryota"/>
</dbReference>
<dbReference type="InParanoid" id="Q701R1"/>
<dbReference type="BRENDA" id="2.4.99.1">
    <property type="organism ID" value="8483"/>
</dbReference>
<dbReference type="Proteomes" id="UP000008143">
    <property type="component" value="Unplaced"/>
</dbReference>
<dbReference type="GO" id="GO:0032580">
    <property type="term" value="C:Golgi cisterna membrane"/>
    <property type="evidence" value="ECO:0007669"/>
    <property type="project" value="UniProtKB-SubCell"/>
</dbReference>
<dbReference type="GO" id="GO:0003835">
    <property type="term" value="F:beta-galactoside alpha-2,6-sialyltransferase activity"/>
    <property type="evidence" value="ECO:0007669"/>
    <property type="project" value="RHEA"/>
</dbReference>
<dbReference type="GO" id="GO:0006486">
    <property type="term" value="P:protein glycosylation"/>
    <property type="evidence" value="ECO:0007669"/>
    <property type="project" value="InterPro"/>
</dbReference>
<dbReference type="CDD" id="cd23986">
    <property type="entry name" value="GT29_ST6GAL2"/>
    <property type="match status" value="1"/>
</dbReference>
<dbReference type="FunFam" id="3.90.1480.20:FF:000010">
    <property type="entry name" value="ST6 beta-galactoside alpha-2,6-sialyltransferase 2"/>
    <property type="match status" value="1"/>
</dbReference>
<dbReference type="Gene3D" id="3.90.1480.20">
    <property type="entry name" value="Glycosyl transferase family 29"/>
    <property type="match status" value="1"/>
</dbReference>
<dbReference type="InterPro" id="IPR001675">
    <property type="entry name" value="Glyco_trans_29"/>
</dbReference>
<dbReference type="InterPro" id="IPR038578">
    <property type="entry name" value="GT29-like_sf"/>
</dbReference>
<dbReference type="PANTHER" id="PTHR46059">
    <property type="entry name" value="BETA-GALACTOSIDE ALPHA-2,6-SIALYLTRANSFERASE"/>
    <property type="match status" value="1"/>
</dbReference>
<dbReference type="PANTHER" id="PTHR46059:SF3">
    <property type="entry name" value="BETA-GALACTOSIDE ALPHA-2,6-SIALYLTRANSFERASE 2"/>
    <property type="match status" value="1"/>
</dbReference>
<dbReference type="Pfam" id="PF00777">
    <property type="entry name" value="Glyco_transf_29"/>
    <property type="match status" value="1"/>
</dbReference>
<organism>
    <name type="scientific">Xenopus tropicalis</name>
    <name type="common">Western clawed frog</name>
    <name type="synonym">Silurana tropicalis</name>
    <dbReference type="NCBI Taxonomy" id="8364"/>
    <lineage>
        <taxon>Eukaryota</taxon>
        <taxon>Metazoa</taxon>
        <taxon>Chordata</taxon>
        <taxon>Craniata</taxon>
        <taxon>Vertebrata</taxon>
        <taxon>Euteleostomi</taxon>
        <taxon>Amphibia</taxon>
        <taxon>Batrachia</taxon>
        <taxon>Anura</taxon>
        <taxon>Pipoidea</taxon>
        <taxon>Pipidae</taxon>
        <taxon>Xenopodinae</taxon>
        <taxon>Xenopus</taxon>
        <taxon>Silurana</taxon>
    </lineage>
</organism>
<sequence length="517" mass="59959">MKPNLKQWKQFMLFGICAWGLLFLVIFVYFTDSNSVEPVPSAFSYVESKKHFPLQGKQRAIMGAHQDQLFSYAIDDQDLLKEGILDSFIVGPGSMKKMAGADNYFESEQEFIMSKKTQKSTSNNHEDDDDEIYLHKNIDSVSGKKAPAYGKRYYHDTQRQHKKIRRNMQRKKQHMIEDSYDWNGFSSSMSKSFLQKLWKGNVSSKMLTPRLQKARREYLRANKLGVNFNGKQNSRKLNPQELLCVLKDRAQVKTLDGKDAPFSSLGWEKYFPKIALNKLYPHGFSTCAVVSSAGAILNSSLGAEIDSHDAVLRFNSAPTRNYEKDVGNKTTLRIINSQILTNPNHHFTDSSLYKDVTLIAWDPSPYYADLHMWYHKPDYNLFPPYEKHRKRNPDQPFYILHPKFTWELWKIIQENSNEKIQPNPPSSGFIGILIMMSMCRTVHVYEYIPSYRQTDLCHYHEQYYDAACTLGAYHPLLYEKMLIQRINQGTEDNLLRKGKVILPGFSSIHCPIKDHIT</sequence>
<gene>
    <name type="primary">st6gal2</name>
</gene>
<feature type="chain" id="PRO_0000314793" description="Beta-galactoside alpha-2,6-sialyltransferase 2">
    <location>
        <begin position="1"/>
        <end position="517"/>
    </location>
</feature>
<feature type="topological domain" description="Cytoplasmic" evidence="3">
    <location>
        <begin position="1"/>
        <end position="10"/>
    </location>
</feature>
<feature type="transmembrane region" description="Helical; Signal-anchor for type II membrane protein" evidence="3">
    <location>
        <begin position="11"/>
        <end position="31"/>
    </location>
</feature>
<feature type="topological domain" description="Lumenal" evidence="3">
    <location>
        <begin position="32"/>
        <end position="517"/>
    </location>
</feature>
<feature type="glycosylation site" description="N-linked (GlcNAc...) asparagine" evidence="3">
    <location>
        <position position="201"/>
    </location>
</feature>
<feature type="glycosylation site" description="N-linked (GlcNAc...) asparagine" evidence="3">
    <location>
        <position position="298"/>
    </location>
</feature>
<feature type="glycosylation site" description="N-linked (GlcNAc...) asparagine" evidence="3">
    <location>
        <position position="328"/>
    </location>
</feature>
<feature type="disulfide bond" evidence="1">
    <location>
        <begin position="244"/>
        <end position="510"/>
    </location>
</feature>
<feature type="disulfide bond" evidence="1">
    <location>
        <begin position="287"/>
        <end position="439"/>
    </location>
</feature>
<feature type="disulfide bond" evidence="1">
    <location>
        <begin position="457"/>
        <end position="468"/>
    </location>
</feature>
<keyword id="KW-1015">Disulfide bond</keyword>
<keyword id="KW-0325">Glycoprotein</keyword>
<keyword id="KW-0328">Glycosyltransferase</keyword>
<keyword id="KW-0333">Golgi apparatus</keyword>
<keyword id="KW-0472">Membrane</keyword>
<keyword id="KW-1185">Reference proteome</keyword>
<keyword id="KW-0735">Signal-anchor</keyword>
<keyword id="KW-0808">Transferase</keyword>
<keyword id="KW-0812">Transmembrane</keyword>
<keyword id="KW-1133">Transmembrane helix</keyword>
<comment type="function">
    <text evidence="1">Transfers sialic acid from the donor of substrate CMP-sialic acid to galactose containing acceptor substrates.</text>
</comment>
<comment type="catalytic activity">
    <reaction evidence="2">
        <text>a beta-D-galactoside + CMP-N-acetyl-beta-neuraminate = an N-acetyl-alpha-neuraminyl-(2-&gt;6)-beta-D-galactosyl derivative + CMP + H(+)</text>
        <dbReference type="Rhea" id="RHEA:52104"/>
        <dbReference type="ChEBI" id="CHEBI:15378"/>
        <dbReference type="ChEBI" id="CHEBI:28034"/>
        <dbReference type="ChEBI" id="CHEBI:57812"/>
        <dbReference type="ChEBI" id="CHEBI:60377"/>
        <dbReference type="ChEBI" id="CHEBI:136398"/>
        <dbReference type="EC" id="2.4.3.1"/>
    </reaction>
</comment>
<comment type="subcellular location">
    <subcellularLocation>
        <location evidence="1">Golgi apparatus</location>
        <location evidence="1">Golgi stack membrane</location>
        <topology evidence="1">Single-pass type II membrane protein</topology>
    </subcellularLocation>
</comment>
<comment type="similarity">
    <text evidence="4">Belongs to the glycosyltransferase 29 family.</text>
</comment>
<protein>
    <recommendedName>
        <fullName>Beta-galactoside alpha-2,6-sialyltransferase 2</fullName>
        <shortName>Alpha 2,6-ST 2</shortName>
        <ecNumber evidence="2">2.4.3.1</ecNumber>
    </recommendedName>
    <alternativeName>
        <fullName>CMP-N-acetylneuraminate-beta-galactosamide-alpha-2,6-sialyltransferase 2</fullName>
    </alternativeName>
    <alternativeName>
        <fullName>ST6Gal II</fullName>
        <shortName>ST6GalII</shortName>
    </alternativeName>
    <alternativeName>
        <fullName>Sialyltransferase 2</fullName>
    </alternativeName>
</protein>